<comment type="function">
    <text evidence="1">NDH-1 shuttles electrons from NADH, via FMN and iron-sulfur (Fe-S) centers, to quinones in the respiratory chain. The immediate electron acceptor for the enzyme in this species is believed to be ubiquinone. Couples the redox reaction to proton translocation (for every two electrons transferred, four hydrogen ions are translocated across the cytoplasmic membrane), and thus conserves the redox energy in a proton gradient.</text>
</comment>
<comment type="catalytic activity">
    <reaction evidence="1">
        <text>a quinone + NADH + 5 H(+)(in) = a quinol + NAD(+) + 4 H(+)(out)</text>
        <dbReference type="Rhea" id="RHEA:57888"/>
        <dbReference type="ChEBI" id="CHEBI:15378"/>
        <dbReference type="ChEBI" id="CHEBI:24646"/>
        <dbReference type="ChEBI" id="CHEBI:57540"/>
        <dbReference type="ChEBI" id="CHEBI:57945"/>
        <dbReference type="ChEBI" id="CHEBI:132124"/>
    </reaction>
</comment>
<comment type="subunit">
    <text evidence="1">NDH-1 is composed of 14 different subunits. Subunits NuoB, C, D, E, F, and G constitute the peripheral sector of the complex.</text>
</comment>
<comment type="subcellular location">
    <subcellularLocation>
        <location evidence="1">Cell inner membrane</location>
        <topology evidence="1">Peripheral membrane protein</topology>
        <orientation evidence="1">Cytoplasmic side</orientation>
    </subcellularLocation>
</comment>
<comment type="similarity">
    <text evidence="1">Belongs to the complex I 30 kDa subunit family.</text>
</comment>
<accession>Q2K9T3</accession>
<keyword id="KW-0997">Cell inner membrane</keyword>
<keyword id="KW-1003">Cell membrane</keyword>
<keyword id="KW-0472">Membrane</keyword>
<keyword id="KW-0520">NAD</keyword>
<keyword id="KW-0874">Quinone</keyword>
<keyword id="KW-1185">Reference proteome</keyword>
<keyword id="KW-1278">Translocase</keyword>
<keyword id="KW-0813">Transport</keyword>
<keyword id="KW-0830">Ubiquinone</keyword>
<protein>
    <recommendedName>
        <fullName evidence="1">NADH-quinone oxidoreductase subunit C</fullName>
        <ecNumber evidence="1">7.1.1.-</ecNumber>
    </recommendedName>
    <alternativeName>
        <fullName evidence="1">NADH dehydrogenase I subunit C</fullName>
    </alternativeName>
    <alternativeName>
        <fullName evidence="1">NDH-1 subunit C</fullName>
    </alternativeName>
</protein>
<proteinExistence type="inferred from homology"/>
<name>NUOC_RHIEC</name>
<reference key="1">
    <citation type="journal article" date="2006" name="Proc. Natl. Acad. Sci. U.S.A.">
        <title>The partitioned Rhizobium etli genome: genetic and metabolic redundancy in seven interacting replicons.</title>
        <authorList>
            <person name="Gonzalez V."/>
            <person name="Santamaria R.I."/>
            <person name="Bustos P."/>
            <person name="Hernandez-Gonzalez I."/>
            <person name="Medrano-Soto A."/>
            <person name="Moreno-Hagelsieb G."/>
            <person name="Janga S.C."/>
            <person name="Ramirez M.A."/>
            <person name="Jimenez-Jacinto V."/>
            <person name="Collado-Vides J."/>
            <person name="Davila G."/>
        </authorList>
    </citation>
    <scope>NUCLEOTIDE SEQUENCE [LARGE SCALE GENOMIC DNA]</scope>
    <source>
        <strain>ATCC 51251 / DSM 11541 / JCM 21823 / NBRC 15573 / CFN 42</strain>
    </source>
</reference>
<sequence length="200" mass="22840">MSEALTELASYLGEARGNLIAASQLKYGELTLTATGENLIALLTFLRDDAKCGFVNMIDICGVDWPQRELRFDVVYHLLSPKKNLRIRVKVATDEDTPVPSACAVYPGADWFERETWDMYGVLFTGHPDLRRILTDYGFEGHPLRKDFPTTGFVEVRYDDAAKRVVYEPVELKQEFRNFDFMSPWEGTEYVLPGDEKAKQ</sequence>
<dbReference type="EC" id="7.1.1.-" evidence="1"/>
<dbReference type="EMBL" id="CP000133">
    <property type="protein sequence ID" value="ABC90403.1"/>
    <property type="molecule type" value="Genomic_DNA"/>
</dbReference>
<dbReference type="RefSeq" id="WP_011424923.1">
    <property type="nucleotide sequence ID" value="NC_007761.1"/>
</dbReference>
<dbReference type="SMR" id="Q2K9T3"/>
<dbReference type="KEGG" id="ret:RHE_CH01604"/>
<dbReference type="eggNOG" id="COG0852">
    <property type="taxonomic scope" value="Bacteria"/>
</dbReference>
<dbReference type="HOGENOM" id="CLU_042628_2_1_5"/>
<dbReference type="OrthoDB" id="9803286at2"/>
<dbReference type="Proteomes" id="UP000001936">
    <property type="component" value="Chromosome"/>
</dbReference>
<dbReference type="GO" id="GO:0005886">
    <property type="term" value="C:plasma membrane"/>
    <property type="evidence" value="ECO:0007669"/>
    <property type="project" value="UniProtKB-SubCell"/>
</dbReference>
<dbReference type="GO" id="GO:0008137">
    <property type="term" value="F:NADH dehydrogenase (ubiquinone) activity"/>
    <property type="evidence" value="ECO:0007669"/>
    <property type="project" value="InterPro"/>
</dbReference>
<dbReference type="GO" id="GO:0050136">
    <property type="term" value="F:NADH:ubiquinone reductase (non-electrogenic) activity"/>
    <property type="evidence" value="ECO:0007669"/>
    <property type="project" value="UniProtKB-UniRule"/>
</dbReference>
<dbReference type="GO" id="GO:0048038">
    <property type="term" value="F:quinone binding"/>
    <property type="evidence" value="ECO:0007669"/>
    <property type="project" value="UniProtKB-KW"/>
</dbReference>
<dbReference type="Gene3D" id="3.30.460.80">
    <property type="entry name" value="NADH:ubiquinone oxidoreductase, 30kDa subunit"/>
    <property type="match status" value="1"/>
</dbReference>
<dbReference type="HAMAP" id="MF_01357">
    <property type="entry name" value="NDH1_NuoC"/>
    <property type="match status" value="1"/>
</dbReference>
<dbReference type="InterPro" id="IPR010218">
    <property type="entry name" value="NADH_DH_suC"/>
</dbReference>
<dbReference type="InterPro" id="IPR037232">
    <property type="entry name" value="NADH_quin_OxRdtase_su_C/D-like"/>
</dbReference>
<dbReference type="InterPro" id="IPR001268">
    <property type="entry name" value="NADH_UbQ_OxRdtase_30kDa_su"/>
</dbReference>
<dbReference type="InterPro" id="IPR020396">
    <property type="entry name" value="NADH_UbQ_OxRdtase_CS"/>
</dbReference>
<dbReference type="NCBIfam" id="TIGR01961">
    <property type="entry name" value="NuoC_fam"/>
    <property type="match status" value="1"/>
</dbReference>
<dbReference type="NCBIfam" id="NF004733">
    <property type="entry name" value="PRK06074.1-5"/>
    <property type="match status" value="1"/>
</dbReference>
<dbReference type="PANTHER" id="PTHR10884:SF14">
    <property type="entry name" value="NADH DEHYDROGENASE [UBIQUINONE] IRON-SULFUR PROTEIN 3, MITOCHONDRIAL"/>
    <property type="match status" value="1"/>
</dbReference>
<dbReference type="PANTHER" id="PTHR10884">
    <property type="entry name" value="NADH DEHYDROGENASE UBIQUINONE IRON-SULFUR PROTEIN 3"/>
    <property type="match status" value="1"/>
</dbReference>
<dbReference type="Pfam" id="PF00329">
    <property type="entry name" value="Complex1_30kDa"/>
    <property type="match status" value="1"/>
</dbReference>
<dbReference type="SUPFAM" id="SSF143243">
    <property type="entry name" value="Nqo5-like"/>
    <property type="match status" value="1"/>
</dbReference>
<dbReference type="PROSITE" id="PS00542">
    <property type="entry name" value="COMPLEX1_30K"/>
    <property type="match status" value="1"/>
</dbReference>
<gene>
    <name evidence="1" type="primary">nuoC</name>
    <name type="ordered locus">RHE_CH01604</name>
</gene>
<feature type="chain" id="PRO_0000358178" description="NADH-quinone oxidoreductase subunit C">
    <location>
        <begin position="1"/>
        <end position="200"/>
    </location>
</feature>
<evidence type="ECO:0000255" key="1">
    <source>
        <dbReference type="HAMAP-Rule" id="MF_01357"/>
    </source>
</evidence>
<organism>
    <name type="scientific">Rhizobium etli (strain ATCC 51251 / DSM 11541 / JCM 21823 / NBRC 15573 / CFN 42)</name>
    <dbReference type="NCBI Taxonomy" id="347834"/>
    <lineage>
        <taxon>Bacteria</taxon>
        <taxon>Pseudomonadati</taxon>
        <taxon>Pseudomonadota</taxon>
        <taxon>Alphaproteobacteria</taxon>
        <taxon>Hyphomicrobiales</taxon>
        <taxon>Rhizobiaceae</taxon>
        <taxon>Rhizobium/Agrobacterium group</taxon>
        <taxon>Rhizobium</taxon>
    </lineage>
</organism>